<protein>
    <recommendedName>
        <fullName evidence="1">Eukaryotic translation initiation factor 3 subunit G-2</fullName>
    </recommendedName>
    <alternativeName>
        <fullName evidence="2">Eukaryotic translation initiation factor 3 RNA-binding subunit 2</fullName>
        <shortName evidence="2">eIF-3 RNA-binding subunit 2</shortName>
    </alternativeName>
    <alternativeName>
        <fullName evidence="2">Eukaryotic translation initiation factor 3 subunit 4-2</fullName>
    </alternativeName>
</protein>
<gene>
    <name evidence="1" type="primary">eIF3g2</name>
    <name evidence="2" type="synonym">eIF3-S4</name>
    <name evidence="1" type="synonym">eIF3gb</name>
    <name type="ORF">GL23467</name>
</gene>
<reference key="1">
    <citation type="journal article" date="2007" name="Nature">
        <title>Evolution of genes and genomes on the Drosophila phylogeny.</title>
        <authorList>
            <consortium name="Drosophila 12 genomes consortium"/>
        </authorList>
    </citation>
    <scope>NUCLEOTIDE SEQUENCE [LARGE SCALE GENOMIC DNA]</scope>
    <source>
        <strain>MSH-3 / Tucson 14011-0111.49</strain>
    </source>
</reference>
<organism>
    <name type="scientific">Drosophila persimilis</name>
    <name type="common">Fruit fly</name>
    <dbReference type="NCBI Taxonomy" id="7234"/>
    <lineage>
        <taxon>Eukaryota</taxon>
        <taxon>Metazoa</taxon>
        <taxon>Ecdysozoa</taxon>
        <taxon>Arthropoda</taxon>
        <taxon>Hexapoda</taxon>
        <taxon>Insecta</taxon>
        <taxon>Pterygota</taxon>
        <taxon>Neoptera</taxon>
        <taxon>Endopterygota</taxon>
        <taxon>Diptera</taxon>
        <taxon>Brachycera</taxon>
        <taxon>Muscomorpha</taxon>
        <taxon>Ephydroidea</taxon>
        <taxon>Drosophilidae</taxon>
        <taxon>Drosophila</taxon>
        <taxon>Sophophora</taxon>
    </lineage>
</organism>
<sequence>MKPMKTSWADEVEADYVDGLPPSKEYTQGNLKFVAEYKYNEDGKKVKVVRTYKIQKQTVPKVVARRRNWSKFGDSLLDKPGPCSQTTMVAEEVHMVFISSKELEQAQAQEPQVEPGKNIARCRICNGEHWSVNCPYKGTSMDSKTLMESKATAAAAAAVSDASKTGKYVSPFLKEGGCAIGGGIGIGAKPWVRERSAVRISNLSESMTEADLEELVKKIGPHTKLYLAREKNTGLCKGFAYVHFKFRQDAAAAIEILNGHGYDHLILCVEWSKPQP</sequence>
<dbReference type="EMBL" id="CH479179">
    <property type="protein sequence ID" value="EDW24324.1"/>
    <property type="molecule type" value="Genomic_DNA"/>
</dbReference>
<dbReference type="SMR" id="B4G3E2"/>
<dbReference type="STRING" id="7234.B4G3E2"/>
<dbReference type="EnsemblMetazoa" id="FBtr0189082">
    <property type="protein sequence ID" value="FBpp0187574"/>
    <property type="gene ID" value="FBgn0161057"/>
</dbReference>
<dbReference type="EnsemblMetazoa" id="XM_002013302.2">
    <property type="protein sequence ID" value="XP_002013338.1"/>
    <property type="gene ID" value="LOC6587924"/>
</dbReference>
<dbReference type="GeneID" id="6587924"/>
<dbReference type="KEGG" id="dpe:6587924"/>
<dbReference type="CTD" id="42422"/>
<dbReference type="eggNOG" id="KOG0122">
    <property type="taxonomic scope" value="Eukaryota"/>
</dbReference>
<dbReference type="HOGENOM" id="CLU_034595_0_0_1"/>
<dbReference type="OMA" id="EEVHMVF"/>
<dbReference type="OrthoDB" id="639027at2759"/>
<dbReference type="PhylomeDB" id="B4G3E2"/>
<dbReference type="Proteomes" id="UP000008744">
    <property type="component" value="Unassembled WGS sequence"/>
</dbReference>
<dbReference type="GO" id="GO:0016282">
    <property type="term" value="C:eukaryotic 43S preinitiation complex"/>
    <property type="evidence" value="ECO:0007669"/>
    <property type="project" value="UniProtKB-UniRule"/>
</dbReference>
<dbReference type="GO" id="GO:0033290">
    <property type="term" value="C:eukaryotic 48S preinitiation complex"/>
    <property type="evidence" value="ECO:0007669"/>
    <property type="project" value="UniProtKB-UniRule"/>
</dbReference>
<dbReference type="GO" id="GO:0005852">
    <property type="term" value="C:eukaryotic translation initiation factor 3 complex"/>
    <property type="evidence" value="ECO:0007669"/>
    <property type="project" value="UniProtKB-UniRule"/>
</dbReference>
<dbReference type="GO" id="GO:0003723">
    <property type="term" value="F:RNA binding"/>
    <property type="evidence" value="ECO:0007669"/>
    <property type="project" value="UniProtKB-UniRule"/>
</dbReference>
<dbReference type="GO" id="GO:0003743">
    <property type="term" value="F:translation initiation factor activity"/>
    <property type="evidence" value="ECO:0007669"/>
    <property type="project" value="UniProtKB-UniRule"/>
</dbReference>
<dbReference type="GO" id="GO:0001732">
    <property type="term" value="P:formation of cytoplasmic translation initiation complex"/>
    <property type="evidence" value="ECO:0007669"/>
    <property type="project" value="UniProtKB-UniRule"/>
</dbReference>
<dbReference type="CDD" id="cd12933">
    <property type="entry name" value="eIF3G"/>
    <property type="match status" value="1"/>
</dbReference>
<dbReference type="CDD" id="cd12408">
    <property type="entry name" value="RRM_eIF3G_like"/>
    <property type="match status" value="1"/>
</dbReference>
<dbReference type="Gene3D" id="3.30.70.330">
    <property type="match status" value="1"/>
</dbReference>
<dbReference type="HAMAP" id="MF_03006">
    <property type="entry name" value="eIF3g"/>
    <property type="match status" value="1"/>
</dbReference>
<dbReference type="InterPro" id="IPR017334">
    <property type="entry name" value="eIF3_g"/>
</dbReference>
<dbReference type="InterPro" id="IPR024675">
    <property type="entry name" value="eIF3g_N"/>
</dbReference>
<dbReference type="InterPro" id="IPR034240">
    <property type="entry name" value="eIF3G_RRM"/>
</dbReference>
<dbReference type="InterPro" id="IPR012677">
    <property type="entry name" value="Nucleotide-bd_a/b_plait_sf"/>
</dbReference>
<dbReference type="InterPro" id="IPR035979">
    <property type="entry name" value="RBD_domain_sf"/>
</dbReference>
<dbReference type="InterPro" id="IPR000504">
    <property type="entry name" value="RRM_dom"/>
</dbReference>
<dbReference type="PANTHER" id="PTHR10352">
    <property type="entry name" value="EUKARYOTIC TRANSLATION INITIATION FACTOR 3 SUBUNIT G"/>
    <property type="match status" value="1"/>
</dbReference>
<dbReference type="Pfam" id="PF12353">
    <property type="entry name" value="eIF3g"/>
    <property type="match status" value="1"/>
</dbReference>
<dbReference type="Pfam" id="PF00076">
    <property type="entry name" value="RRM_1"/>
    <property type="match status" value="1"/>
</dbReference>
<dbReference type="PIRSF" id="PIRSF037949">
    <property type="entry name" value="Transl_init_eIF-3_RNA-bind"/>
    <property type="match status" value="1"/>
</dbReference>
<dbReference type="SMART" id="SM00360">
    <property type="entry name" value="RRM"/>
    <property type="match status" value="1"/>
</dbReference>
<dbReference type="SUPFAM" id="SSF54928">
    <property type="entry name" value="RNA-binding domain, RBD"/>
    <property type="match status" value="1"/>
</dbReference>
<dbReference type="PROSITE" id="PS50102">
    <property type="entry name" value="RRM"/>
    <property type="match status" value="1"/>
</dbReference>
<keyword id="KW-0963">Cytoplasm</keyword>
<keyword id="KW-0396">Initiation factor</keyword>
<keyword id="KW-0648">Protein biosynthesis</keyword>
<keyword id="KW-1185">Reference proteome</keyword>
<keyword id="KW-0694">RNA-binding</keyword>
<comment type="function">
    <text evidence="2">RNA-binding component of the eukaryotic translation initiation factor 3 (eIF-3) complex, which is involved in protein synthesis of a specialized repertoire of mRNAs and, together with other initiation factors, stimulates binding of mRNA and methionyl-tRNAi to the 40S ribosome. The eIF-3 complex specifically targets and initiates translation of a subset of mRNAs involved in cell proliferation. This subunit can bind 18S rRNA.</text>
</comment>
<comment type="subunit">
    <text evidence="2">Component of the eukaryotic translation initiation factor 3 (eIF-3) complex. The eIF-3 complex interacts with pix.</text>
</comment>
<comment type="subcellular location">
    <subcellularLocation>
        <location evidence="2">Cytoplasm</location>
    </subcellularLocation>
</comment>
<comment type="similarity">
    <text evidence="2">Belongs to the eIF-3 subunit G family.</text>
</comment>
<feature type="chain" id="PRO_0000365418" description="Eukaryotic translation initiation factor 3 subunit G-2">
    <location>
        <begin position="1"/>
        <end position="276"/>
    </location>
</feature>
<feature type="domain" description="RRM" evidence="2">
    <location>
        <begin position="196"/>
        <end position="274"/>
    </location>
</feature>
<evidence type="ECO:0000250" key="1">
    <source>
        <dbReference type="UniProtKB" id="Q9VDM6"/>
    </source>
</evidence>
<evidence type="ECO:0000255" key="2">
    <source>
        <dbReference type="HAMAP-Rule" id="MF_03006"/>
    </source>
</evidence>
<name>EI3G2_DROPE</name>
<accession>B4G3E2</accession>
<proteinExistence type="inferred from homology"/>